<comment type="interaction">
    <interactant intactId="EBI-21870322">
        <id>Q9H3W5</id>
    </interactant>
    <interactant intactId="EBI-1051681">
        <id>Q9NZT1</id>
        <label>CALML5</label>
    </interactant>
    <organismsDiffer>false</organismsDiffer>
    <experiments>2</experiments>
</comment>
<comment type="subcellular location">
    <subcellularLocation>
        <location evidence="4">Membrane</location>
        <topology evidence="4">Single-pass type I membrane protein</topology>
    </subcellularLocation>
</comment>
<feature type="signal peptide" evidence="1">
    <location>
        <begin position="1"/>
        <end position="22"/>
    </location>
</feature>
<feature type="chain" id="PRO_0000045823" description="Leucine-rich repeat neuronal protein 3">
    <location>
        <begin position="23"/>
        <end position="708"/>
    </location>
</feature>
<feature type="topological domain" description="Extracellular" evidence="1">
    <location>
        <begin position="23"/>
        <end position="628"/>
    </location>
</feature>
<feature type="transmembrane region" description="Helical" evidence="1">
    <location>
        <begin position="629"/>
        <end position="649"/>
    </location>
</feature>
<feature type="topological domain" description="Cytoplasmic" evidence="1">
    <location>
        <begin position="650"/>
        <end position="708"/>
    </location>
</feature>
<feature type="domain" description="LRRNT">
    <location>
        <begin position="23"/>
        <end position="69"/>
    </location>
</feature>
<feature type="repeat" description="LRR 1">
    <location>
        <begin position="70"/>
        <end position="91"/>
    </location>
</feature>
<feature type="repeat" description="LRR 2">
    <location>
        <begin position="93"/>
        <end position="114"/>
    </location>
</feature>
<feature type="repeat" description="LRR 3">
    <location>
        <begin position="117"/>
        <end position="138"/>
    </location>
</feature>
<feature type="repeat" description="LRR 4">
    <location>
        <begin position="141"/>
        <end position="162"/>
    </location>
</feature>
<feature type="repeat" description="LRR 5">
    <location>
        <begin position="165"/>
        <end position="186"/>
    </location>
</feature>
<feature type="repeat" description="LRR 6">
    <location>
        <begin position="189"/>
        <end position="210"/>
    </location>
</feature>
<feature type="repeat" description="LRR 7">
    <location>
        <begin position="213"/>
        <end position="234"/>
    </location>
</feature>
<feature type="repeat" description="LRR 8">
    <location>
        <begin position="237"/>
        <end position="258"/>
    </location>
</feature>
<feature type="repeat" description="LRR 9">
    <location>
        <begin position="261"/>
        <end position="282"/>
    </location>
</feature>
<feature type="repeat" description="LRR 10">
    <location>
        <begin position="285"/>
        <end position="304"/>
    </location>
</feature>
<feature type="repeat" description="LRR 11">
    <location>
        <begin position="310"/>
        <end position="332"/>
    </location>
</feature>
<feature type="repeat" description="LRR 12">
    <location>
        <begin position="335"/>
        <end position="358"/>
    </location>
</feature>
<feature type="domain" description="LRRCT">
    <location>
        <begin position="368"/>
        <end position="421"/>
    </location>
</feature>
<feature type="domain" description="Ig-like C2-type">
    <location>
        <begin position="421"/>
        <end position="514"/>
    </location>
</feature>
<feature type="domain" description="Fibronectin type-III" evidence="3">
    <location>
        <begin position="523"/>
        <end position="617"/>
    </location>
</feature>
<feature type="glycosylation site" description="N-linked (GlcNAc...) asparagine" evidence="1">
    <location>
        <position position="93"/>
    </location>
</feature>
<feature type="glycosylation site" description="N-linked (GlcNAc...) asparagine" evidence="1">
    <location>
        <position position="103"/>
    </location>
</feature>
<feature type="glycosylation site" description="N-linked (GlcNAc...) asparagine" evidence="1">
    <location>
        <position position="223"/>
    </location>
</feature>
<feature type="glycosylation site" description="N-linked (GlcNAc...) asparagine" evidence="1">
    <location>
        <position position="382"/>
    </location>
</feature>
<feature type="glycosylation site" description="N-linked (GlcNAc...) asparagine" evidence="1">
    <location>
        <position position="522"/>
    </location>
</feature>
<feature type="glycosylation site" description="N-linked (GlcNAc...) asparagine" evidence="1">
    <location>
        <position position="579"/>
    </location>
</feature>
<feature type="glycosylation site" description="N-linked (GlcNAc...) asparagine" evidence="1">
    <location>
        <position position="608"/>
    </location>
</feature>
<feature type="glycosylation site" description="N-linked (GlcNAc...) asparagine" evidence="1">
    <location>
        <position position="624"/>
    </location>
</feature>
<feature type="glycosylation site" description="N-linked (GlcNAc...) asparagine" evidence="1">
    <location>
        <position position="625"/>
    </location>
</feature>
<feature type="disulfide bond" evidence="2">
    <location>
        <begin position="444"/>
        <end position="496"/>
    </location>
</feature>
<feature type="sequence variant" id="VAR_049901" description="In dbSNP:rs9942557.">
    <original>D</original>
    <variation>G</variation>
    <location>
        <position position="24"/>
    </location>
</feature>
<feature type="sequence conflict" description="In Ref. 6; AAH35133." evidence="4" ref="6">
    <original>G</original>
    <variation>S</variation>
    <location>
        <position position="96"/>
    </location>
</feature>
<feature type="sequence conflict" description="In Ref. 6; AAH35133." evidence="4" ref="6">
    <original>Q</original>
    <variation>H</variation>
    <location>
        <position position="533"/>
    </location>
</feature>
<feature type="sequence conflict" description="In Ref. 4; CAG33678." evidence="4" ref="4">
    <original>W</original>
    <variation>R</variation>
    <location>
        <position position="541"/>
    </location>
</feature>
<protein>
    <recommendedName>
        <fullName>Leucine-rich repeat neuronal protein 3</fullName>
    </recommendedName>
    <alternativeName>
        <fullName>Neuronal leucine-rich repeat protein 3</fullName>
        <shortName>NLRR-3</shortName>
    </alternativeName>
</protein>
<accession>Q9H3W5</accession>
<accession>O43377</accession>
<accession>Q6I9V8</accession>
<accession>Q8IYQ6</accession>
<gene>
    <name type="primary">LRRN3</name>
    <name type="ORF">Nbla10363</name>
    <name type="ORF">UNQ194/PRO220</name>
</gene>
<reference key="1">
    <citation type="submission" date="1999-03" db="EMBL/GenBank/DDBJ databases">
        <title>Cloning of a new human cDNA homologous to Mus musculus leucine-rich repeat protein.</title>
        <authorList>
            <person name="Jin L."/>
            <person name="Yu L."/>
            <person name="Zhao S.Y."/>
        </authorList>
    </citation>
    <scope>NUCLEOTIDE SEQUENCE [MRNA]</scope>
</reference>
<reference key="2">
    <citation type="submission" date="2001-05" db="EMBL/GenBank/DDBJ databases">
        <title>Human neuronal leucine-rich repeat protein-3 (NLRR-3).</title>
        <authorList>
            <person name="Hamano S."/>
            <person name="Inuzuka H."/>
            <person name="Morohashi A."/>
            <person name="Ohira M."/>
            <person name="Nakagawara A."/>
        </authorList>
    </citation>
    <scope>NUCLEOTIDE SEQUENCE [MRNA]</scope>
</reference>
<reference key="3">
    <citation type="journal article" date="2003" name="Genome Res.">
        <title>The secreted protein discovery initiative (SPDI), a large-scale effort to identify novel human secreted and transmembrane proteins: a bioinformatics assessment.</title>
        <authorList>
            <person name="Clark H.F."/>
            <person name="Gurney A.L."/>
            <person name="Abaya E."/>
            <person name="Baker K."/>
            <person name="Baldwin D.T."/>
            <person name="Brush J."/>
            <person name="Chen J."/>
            <person name="Chow B."/>
            <person name="Chui C."/>
            <person name="Crowley C."/>
            <person name="Currell B."/>
            <person name="Deuel B."/>
            <person name="Dowd P."/>
            <person name="Eaton D."/>
            <person name="Foster J.S."/>
            <person name="Grimaldi C."/>
            <person name="Gu Q."/>
            <person name="Hass P.E."/>
            <person name="Heldens S."/>
            <person name="Huang A."/>
            <person name="Kim H.S."/>
            <person name="Klimowski L."/>
            <person name="Jin Y."/>
            <person name="Johnson S."/>
            <person name="Lee J."/>
            <person name="Lewis L."/>
            <person name="Liao D."/>
            <person name="Mark M.R."/>
            <person name="Robbie E."/>
            <person name="Sanchez C."/>
            <person name="Schoenfeld J."/>
            <person name="Seshagiri S."/>
            <person name="Simmons L."/>
            <person name="Singh J."/>
            <person name="Smith V."/>
            <person name="Stinson J."/>
            <person name="Vagts A."/>
            <person name="Vandlen R.L."/>
            <person name="Watanabe C."/>
            <person name="Wieand D."/>
            <person name="Woods K."/>
            <person name="Xie M.-H."/>
            <person name="Yansura D.G."/>
            <person name="Yi S."/>
            <person name="Yu G."/>
            <person name="Yuan J."/>
            <person name="Zhang M."/>
            <person name="Zhang Z."/>
            <person name="Goddard A.D."/>
            <person name="Wood W.I."/>
            <person name="Godowski P.J."/>
            <person name="Gray A.M."/>
        </authorList>
    </citation>
    <scope>NUCLEOTIDE SEQUENCE [LARGE SCALE MRNA]</scope>
</reference>
<reference key="4">
    <citation type="submission" date="2004-06" db="EMBL/GenBank/DDBJ databases">
        <title>Cloning of human full open reading frames in Gateway(TM) system entry vector (pDONR201).</title>
        <authorList>
            <person name="Ebert L."/>
            <person name="Schick M."/>
            <person name="Neubert P."/>
            <person name="Schatten R."/>
            <person name="Henze S."/>
            <person name="Korn B."/>
        </authorList>
    </citation>
    <scope>NUCLEOTIDE SEQUENCE [LARGE SCALE MRNA]</scope>
</reference>
<reference key="5">
    <citation type="journal article" date="2007" name="BMC Genomics">
        <title>The full-ORF clone resource of the German cDNA consortium.</title>
        <authorList>
            <person name="Bechtel S."/>
            <person name="Rosenfelder H."/>
            <person name="Duda A."/>
            <person name="Schmidt C.P."/>
            <person name="Ernst U."/>
            <person name="Wellenreuther R."/>
            <person name="Mehrle A."/>
            <person name="Schuster C."/>
            <person name="Bahr A."/>
            <person name="Bloecker H."/>
            <person name="Heubner D."/>
            <person name="Hoerlein A."/>
            <person name="Michel G."/>
            <person name="Wedler H."/>
            <person name="Koehrer K."/>
            <person name="Ottenwaelder B."/>
            <person name="Poustka A."/>
            <person name="Wiemann S."/>
            <person name="Schupp I."/>
        </authorList>
    </citation>
    <scope>NUCLEOTIDE SEQUENCE [LARGE SCALE MRNA]</scope>
    <source>
        <tissue>Amygdala</tissue>
    </source>
</reference>
<reference key="6">
    <citation type="journal article" date="2004" name="Genome Res.">
        <title>The status, quality, and expansion of the NIH full-length cDNA project: the Mammalian Gene Collection (MGC).</title>
        <authorList>
            <consortium name="The MGC Project Team"/>
        </authorList>
    </citation>
    <scope>NUCLEOTIDE SEQUENCE [LARGE SCALE MRNA]</scope>
    <source>
        <tissue>Brain</tissue>
    </source>
</reference>
<evidence type="ECO:0000255" key="1"/>
<evidence type="ECO:0000255" key="2">
    <source>
        <dbReference type="PROSITE-ProRule" id="PRU00114"/>
    </source>
</evidence>
<evidence type="ECO:0000255" key="3">
    <source>
        <dbReference type="PROSITE-ProRule" id="PRU00316"/>
    </source>
</evidence>
<evidence type="ECO:0000305" key="4"/>
<organism>
    <name type="scientific">Homo sapiens</name>
    <name type="common">Human</name>
    <dbReference type="NCBI Taxonomy" id="9606"/>
    <lineage>
        <taxon>Eukaryota</taxon>
        <taxon>Metazoa</taxon>
        <taxon>Chordata</taxon>
        <taxon>Craniata</taxon>
        <taxon>Vertebrata</taxon>
        <taxon>Euteleostomi</taxon>
        <taxon>Mammalia</taxon>
        <taxon>Eutheria</taxon>
        <taxon>Euarchontoglires</taxon>
        <taxon>Primates</taxon>
        <taxon>Haplorrhini</taxon>
        <taxon>Catarrhini</taxon>
        <taxon>Hominidae</taxon>
        <taxon>Homo</taxon>
    </lineage>
</organism>
<dbReference type="EMBL" id="AF134481">
    <property type="protein sequence ID" value="AAP97258.1"/>
    <property type="molecule type" value="mRNA"/>
</dbReference>
<dbReference type="EMBL" id="AB060967">
    <property type="protein sequence ID" value="BAB47184.1"/>
    <property type="molecule type" value="mRNA"/>
</dbReference>
<dbReference type="EMBL" id="AY358280">
    <property type="protein sequence ID" value="AAQ88647.1"/>
    <property type="molecule type" value="mRNA"/>
</dbReference>
<dbReference type="EMBL" id="CR457397">
    <property type="protein sequence ID" value="CAG33678.1"/>
    <property type="molecule type" value="mRNA"/>
</dbReference>
<dbReference type="EMBL" id="AL442092">
    <property type="protein sequence ID" value="CAC09450.1"/>
    <property type="molecule type" value="mRNA"/>
</dbReference>
<dbReference type="EMBL" id="BC035133">
    <property type="protein sequence ID" value="AAH35133.1"/>
    <property type="molecule type" value="mRNA"/>
</dbReference>
<dbReference type="CCDS" id="CCDS5754.1"/>
<dbReference type="RefSeq" id="NP_001093128.1">
    <property type="nucleotide sequence ID" value="NM_001099658.2"/>
</dbReference>
<dbReference type="RefSeq" id="NP_001093130.1">
    <property type="nucleotide sequence ID" value="NM_001099660.2"/>
</dbReference>
<dbReference type="RefSeq" id="NP_060804.3">
    <property type="nucleotide sequence ID" value="NM_018334.4"/>
</dbReference>
<dbReference type="SMR" id="Q9H3W5"/>
<dbReference type="BioGRID" id="120095">
    <property type="interactions" value="9"/>
</dbReference>
<dbReference type="FunCoup" id="Q9H3W5">
    <property type="interactions" value="100"/>
</dbReference>
<dbReference type="IntAct" id="Q9H3W5">
    <property type="interactions" value="4"/>
</dbReference>
<dbReference type="STRING" id="9606.ENSP00000397312"/>
<dbReference type="GlyCosmos" id="Q9H3W5">
    <property type="glycosylation" value="9 sites, No reported glycans"/>
</dbReference>
<dbReference type="GlyGen" id="Q9H3W5">
    <property type="glycosylation" value="9 sites"/>
</dbReference>
<dbReference type="iPTMnet" id="Q9H3W5"/>
<dbReference type="PhosphoSitePlus" id="Q9H3W5"/>
<dbReference type="BioMuta" id="LRRN3"/>
<dbReference type="DMDM" id="74761421"/>
<dbReference type="jPOST" id="Q9H3W5"/>
<dbReference type="MassIVE" id="Q9H3W5"/>
<dbReference type="PaxDb" id="9606-ENSP00000397312"/>
<dbReference type="PeptideAtlas" id="Q9H3W5"/>
<dbReference type="ProteomicsDB" id="80766"/>
<dbReference type="Antibodypedia" id="31483">
    <property type="antibodies" value="173 antibodies from 22 providers"/>
</dbReference>
<dbReference type="DNASU" id="54674"/>
<dbReference type="Ensembl" id="ENST00000308478.10">
    <property type="protein sequence ID" value="ENSP00000312001.5"/>
    <property type="gene ID" value="ENSG00000173114.13"/>
</dbReference>
<dbReference type="Ensembl" id="ENST00000422987.3">
    <property type="protein sequence ID" value="ENSP00000412417.2"/>
    <property type="gene ID" value="ENSG00000173114.13"/>
</dbReference>
<dbReference type="Ensembl" id="ENST00000451085.5">
    <property type="protein sequence ID" value="ENSP00000397312.1"/>
    <property type="gene ID" value="ENSG00000173114.13"/>
</dbReference>
<dbReference type="GeneID" id="54674"/>
<dbReference type="KEGG" id="hsa:54674"/>
<dbReference type="MANE-Select" id="ENST00000308478.10">
    <property type="protein sequence ID" value="ENSP00000312001.5"/>
    <property type="RefSeq nucleotide sequence ID" value="NM_001099658.2"/>
    <property type="RefSeq protein sequence ID" value="NP_001093128.1"/>
</dbReference>
<dbReference type="UCSC" id="uc003vfs.5">
    <property type="organism name" value="human"/>
</dbReference>
<dbReference type="AGR" id="HGNC:17200"/>
<dbReference type="CTD" id="54674"/>
<dbReference type="DisGeNET" id="54674"/>
<dbReference type="GeneCards" id="LRRN3"/>
<dbReference type="HGNC" id="HGNC:17200">
    <property type="gene designation" value="LRRN3"/>
</dbReference>
<dbReference type="HPA" id="ENSG00000173114">
    <property type="expression patterns" value="Tissue enhanced (adrenal gland, thyroid gland)"/>
</dbReference>
<dbReference type="MIM" id="619748">
    <property type="type" value="gene"/>
</dbReference>
<dbReference type="neXtProt" id="NX_Q9H3W5"/>
<dbReference type="OpenTargets" id="ENSG00000173114"/>
<dbReference type="PharmGKB" id="PA30468"/>
<dbReference type="VEuPathDB" id="HostDB:ENSG00000173114"/>
<dbReference type="eggNOG" id="KOG0619">
    <property type="taxonomic scope" value="Eukaryota"/>
</dbReference>
<dbReference type="GeneTree" id="ENSGT00940000160513"/>
<dbReference type="HOGENOM" id="CLU_000288_18_18_1"/>
<dbReference type="InParanoid" id="Q9H3W5"/>
<dbReference type="OMA" id="DKFYMHP"/>
<dbReference type="OrthoDB" id="676979at2759"/>
<dbReference type="PAN-GO" id="Q9H3W5">
    <property type="GO annotations" value="2 GO annotations based on evolutionary models"/>
</dbReference>
<dbReference type="PhylomeDB" id="Q9H3W5"/>
<dbReference type="TreeFam" id="TF334360"/>
<dbReference type="PathwayCommons" id="Q9H3W5"/>
<dbReference type="SignaLink" id="Q9H3W5"/>
<dbReference type="BioGRID-ORCS" id="54674">
    <property type="hits" value="7 hits in 1146 CRISPR screens"/>
</dbReference>
<dbReference type="ChiTaRS" id="LRRN3">
    <property type="organism name" value="human"/>
</dbReference>
<dbReference type="GeneWiki" id="LRRN3"/>
<dbReference type="GenomeRNAi" id="54674"/>
<dbReference type="Pharos" id="Q9H3W5">
    <property type="development level" value="Tbio"/>
</dbReference>
<dbReference type="PRO" id="PR:Q9H3W5"/>
<dbReference type="Proteomes" id="UP000005640">
    <property type="component" value="Chromosome 7"/>
</dbReference>
<dbReference type="RNAct" id="Q9H3W5">
    <property type="molecule type" value="protein"/>
</dbReference>
<dbReference type="Bgee" id="ENSG00000173114">
    <property type="expression patterns" value="Expressed in endothelial cell and 186 other cell types or tissues"/>
</dbReference>
<dbReference type="ExpressionAtlas" id="Q9H3W5">
    <property type="expression patterns" value="baseline and differential"/>
</dbReference>
<dbReference type="GO" id="GO:0031012">
    <property type="term" value="C:extracellular matrix"/>
    <property type="evidence" value="ECO:0000318"/>
    <property type="project" value="GO_Central"/>
</dbReference>
<dbReference type="GO" id="GO:0005615">
    <property type="term" value="C:extracellular space"/>
    <property type="evidence" value="ECO:0000318"/>
    <property type="project" value="GO_Central"/>
</dbReference>
<dbReference type="GO" id="GO:0016020">
    <property type="term" value="C:membrane"/>
    <property type="evidence" value="ECO:0007669"/>
    <property type="project" value="UniProtKB-SubCell"/>
</dbReference>
<dbReference type="GO" id="GO:0051965">
    <property type="term" value="P:positive regulation of synapse assembly"/>
    <property type="evidence" value="ECO:0007669"/>
    <property type="project" value="Ensembl"/>
</dbReference>
<dbReference type="CDD" id="cd00063">
    <property type="entry name" value="FN3"/>
    <property type="match status" value="1"/>
</dbReference>
<dbReference type="FunFam" id="2.60.40.10:FF:000355">
    <property type="entry name" value="Leucine-rich repeat neuronal protein 1"/>
    <property type="match status" value="1"/>
</dbReference>
<dbReference type="FunFam" id="2.60.40.10:FF:000481">
    <property type="entry name" value="Leucine-rich repeat neuronal protein 1"/>
    <property type="match status" value="1"/>
</dbReference>
<dbReference type="FunFam" id="3.80.10.10:FF:000056">
    <property type="entry name" value="Leucine-rich repeat neuronal protein 1"/>
    <property type="match status" value="1"/>
</dbReference>
<dbReference type="FunFam" id="3.80.10.10:FF:000074">
    <property type="entry name" value="Leucine-rich repeat neuronal protein 1"/>
    <property type="match status" value="1"/>
</dbReference>
<dbReference type="FunFam" id="3.80.10.10:FF:000090">
    <property type="entry name" value="Leucine-rich repeat neuronal protein 1"/>
    <property type="match status" value="1"/>
</dbReference>
<dbReference type="Gene3D" id="2.60.40.10">
    <property type="entry name" value="Immunoglobulins"/>
    <property type="match status" value="2"/>
</dbReference>
<dbReference type="Gene3D" id="3.80.10.10">
    <property type="entry name" value="Ribonuclease Inhibitor"/>
    <property type="match status" value="2"/>
</dbReference>
<dbReference type="InterPro" id="IPR000483">
    <property type="entry name" value="Cys-rich_flank_reg_C"/>
</dbReference>
<dbReference type="InterPro" id="IPR003961">
    <property type="entry name" value="FN3_dom"/>
</dbReference>
<dbReference type="InterPro" id="IPR036116">
    <property type="entry name" value="FN3_sf"/>
</dbReference>
<dbReference type="InterPro" id="IPR007110">
    <property type="entry name" value="Ig-like_dom"/>
</dbReference>
<dbReference type="InterPro" id="IPR036179">
    <property type="entry name" value="Ig-like_dom_sf"/>
</dbReference>
<dbReference type="InterPro" id="IPR013783">
    <property type="entry name" value="Ig-like_fold"/>
</dbReference>
<dbReference type="InterPro" id="IPR013098">
    <property type="entry name" value="Ig_I-set"/>
</dbReference>
<dbReference type="InterPro" id="IPR003599">
    <property type="entry name" value="Ig_sub"/>
</dbReference>
<dbReference type="InterPro" id="IPR003598">
    <property type="entry name" value="Ig_sub2"/>
</dbReference>
<dbReference type="InterPro" id="IPR001611">
    <property type="entry name" value="Leu-rich_rpt"/>
</dbReference>
<dbReference type="InterPro" id="IPR003591">
    <property type="entry name" value="Leu-rich_rpt_typical-subtyp"/>
</dbReference>
<dbReference type="InterPro" id="IPR032675">
    <property type="entry name" value="LRR_dom_sf"/>
</dbReference>
<dbReference type="InterPro" id="IPR050541">
    <property type="entry name" value="LRR_TM_domain-containing"/>
</dbReference>
<dbReference type="InterPro" id="IPR000372">
    <property type="entry name" value="LRRNT"/>
</dbReference>
<dbReference type="PANTHER" id="PTHR24369">
    <property type="entry name" value="ANTIGEN BSP, PUTATIVE-RELATED"/>
    <property type="match status" value="1"/>
</dbReference>
<dbReference type="PANTHER" id="PTHR24369:SF213">
    <property type="entry name" value="INSULIN LIKE GROWTH FACTOR BINDING PROTEIN ACID LABILE SUBUNIT"/>
    <property type="match status" value="1"/>
</dbReference>
<dbReference type="Pfam" id="PF00041">
    <property type="entry name" value="fn3"/>
    <property type="match status" value="1"/>
</dbReference>
<dbReference type="Pfam" id="PF07679">
    <property type="entry name" value="I-set"/>
    <property type="match status" value="1"/>
</dbReference>
<dbReference type="Pfam" id="PF13855">
    <property type="entry name" value="LRR_8"/>
    <property type="match status" value="3"/>
</dbReference>
<dbReference type="SMART" id="SM00409">
    <property type="entry name" value="IG"/>
    <property type="match status" value="1"/>
</dbReference>
<dbReference type="SMART" id="SM00408">
    <property type="entry name" value="IGc2"/>
    <property type="match status" value="1"/>
</dbReference>
<dbReference type="SMART" id="SM00365">
    <property type="entry name" value="LRR_SD22"/>
    <property type="match status" value="5"/>
</dbReference>
<dbReference type="SMART" id="SM00369">
    <property type="entry name" value="LRR_TYP"/>
    <property type="match status" value="8"/>
</dbReference>
<dbReference type="SMART" id="SM00082">
    <property type="entry name" value="LRRCT"/>
    <property type="match status" value="1"/>
</dbReference>
<dbReference type="SMART" id="SM00013">
    <property type="entry name" value="LRRNT"/>
    <property type="match status" value="1"/>
</dbReference>
<dbReference type="SUPFAM" id="SSF49265">
    <property type="entry name" value="Fibronectin type III"/>
    <property type="match status" value="1"/>
</dbReference>
<dbReference type="SUPFAM" id="SSF48726">
    <property type="entry name" value="Immunoglobulin"/>
    <property type="match status" value="1"/>
</dbReference>
<dbReference type="SUPFAM" id="SSF52058">
    <property type="entry name" value="L domain-like"/>
    <property type="match status" value="1"/>
</dbReference>
<dbReference type="PROSITE" id="PS50853">
    <property type="entry name" value="FN3"/>
    <property type="match status" value="1"/>
</dbReference>
<dbReference type="PROSITE" id="PS50835">
    <property type="entry name" value="IG_LIKE"/>
    <property type="match status" value="1"/>
</dbReference>
<dbReference type="PROSITE" id="PS51450">
    <property type="entry name" value="LRR"/>
    <property type="match status" value="10"/>
</dbReference>
<proteinExistence type="evidence at protein level"/>
<keyword id="KW-1015">Disulfide bond</keyword>
<keyword id="KW-0325">Glycoprotein</keyword>
<keyword id="KW-0393">Immunoglobulin domain</keyword>
<keyword id="KW-0433">Leucine-rich repeat</keyword>
<keyword id="KW-0472">Membrane</keyword>
<keyword id="KW-1267">Proteomics identification</keyword>
<keyword id="KW-1185">Reference proteome</keyword>
<keyword id="KW-0677">Repeat</keyword>
<keyword id="KW-0732">Signal</keyword>
<keyword id="KW-0812">Transmembrane</keyword>
<keyword id="KW-1133">Transmembrane helix</keyword>
<sequence>MKDMPLRIHVLLGLAITTLVQAVDKKVDCPRLCTCEIRPWFTPRSIYMEASTVDCNDLGLLTFPARLPANTQILLLQTNNIAKIEYSTDFPVNLTGLDLSQNNLSSVTNINVKKMPQLLSVYLEENKLTELPEKCLSELSNLQELYINHNLLSTISPGAFIGLHNLLRLHLNSNRLQMINSKWFDALPNLEILMIGENPIIRIKDMNFKPLINLRSLVIAGINLTEIPDNALVGLENLESISFYDNRLIKVPHVALQKVVNLKFLDLNKNPINRIRRGDFSNMLHLKELGINNMPELISIDSLAVDNLPDLRKIEATNNPRLSYIHPNAFFRLPKLESLMLNSNALSALYHGTIESLPNLKEISIHSNPIRCDCVIRWMNMNKTNIRFMEPDSLFCVDPPEFQGQNVRQVHFRDMMEICLPLIAPESFPSNLNVEAGSYVSFHCRATAEPQPEIYWITPSGQKLLPNTLTDKFYVHSEGTLDINGVTPKEGGLYTCIATNLVGADLKSVMIKVDGSFPQDNNGSLNIKIRDIQANSVLVSWKASSKILKSSVKWTAFVKTENSHAAQSARIPSDVKVYNLTHLNPSTEYKICIDIPTIYQKNRKKCVNVTTKGLHPDQKEYEKNNTTTLMACLGGLLGIIGVICLISCLSPEMNCDGGHSYVRNYLQKPTFALGELYPPLINLWEAGKEKSTSLKVKATVIGLPTNMS</sequence>
<name>LRRN3_HUMAN</name>